<reference key="1">
    <citation type="journal article" date="2005" name="Nature">
        <title>The genome of the social amoeba Dictyostelium discoideum.</title>
        <authorList>
            <person name="Eichinger L."/>
            <person name="Pachebat J.A."/>
            <person name="Gloeckner G."/>
            <person name="Rajandream M.A."/>
            <person name="Sucgang R."/>
            <person name="Berriman M."/>
            <person name="Song J."/>
            <person name="Olsen R."/>
            <person name="Szafranski K."/>
            <person name="Xu Q."/>
            <person name="Tunggal B."/>
            <person name="Kummerfeld S."/>
            <person name="Madera M."/>
            <person name="Konfortov B.A."/>
            <person name="Rivero F."/>
            <person name="Bankier A.T."/>
            <person name="Lehmann R."/>
            <person name="Hamlin N."/>
            <person name="Davies R."/>
            <person name="Gaudet P."/>
            <person name="Fey P."/>
            <person name="Pilcher K."/>
            <person name="Chen G."/>
            <person name="Saunders D."/>
            <person name="Sodergren E.J."/>
            <person name="Davis P."/>
            <person name="Kerhornou A."/>
            <person name="Nie X."/>
            <person name="Hall N."/>
            <person name="Anjard C."/>
            <person name="Hemphill L."/>
            <person name="Bason N."/>
            <person name="Farbrother P."/>
            <person name="Desany B."/>
            <person name="Just E."/>
            <person name="Morio T."/>
            <person name="Rost R."/>
            <person name="Churcher C.M."/>
            <person name="Cooper J."/>
            <person name="Haydock S."/>
            <person name="van Driessche N."/>
            <person name="Cronin A."/>
            <person name="Goodhead I."/>
            <person name="Muzny D.M."/>
            <person name="Mourier T."/>
            <person name="Pain A."/>
            <person name="Lu M."/>
            <person name="Harper D."/>
            <person name="Lindsay R."/>
            <person name="Hauser H."/>
            <person name="James K.D."/>
            <person name="Quiles M."/>
            <person name="Madan Babu M."/>
            <person name="Saito T."/>
            <person name="Buchrieser C."/>
            <person name="Wardroper A."/>
            <person name="Felder M."/>
            <person name="Thangavelu M."/>
            <person name="Johnson D."/>
            <person name="Knights A."/>
            <person name="Loulseged H."/>
            <person name="Mungall K.L."/>
            <person name="Oliver K."/>
            <person name="Price C."/>
            <person name="Quail M.A."/>
            <person name="Urushihara H."/>
            <person name="Hernandez J."/>
            <person name="Rabbinowitsch E."/>
            <person name="Steffen D."/>
            <person name="Sanders M."/>
            <person name="Ma J."/>
            <person name="Kohara Y."/>
            <person name="Sharp S."/>
            <person name="Simmonds M.N."/>
            <person name="Spiegler S."/>
            <person name="Tivey A."/>
            <person name="Sugano S."/>
            <person name="White B."/>
            <person name="Walker D."/>
            <person name="Woodward J.R."/>
            <person name="Winckler T."/>
            <person name="Tanaka Y."/>
            <person name="Shaulsky G."/>
            <person name="Schleicher M."/>
            <person name="Weinstock G.M."/>
            <person name="Rosenthal A."/>
            <person name="Cox E.C."/>
            <person name="Chisholm R.L."/>
            <person name="Gibbs R.A."/>
            <person name="Loomis W.F."/>
            <person name="Platzer M."/>
            <person name="Kay R.R."/>
            <person name="Williams J.G."/>
            <person name="Dear P.H."/>
            <person name="Noegel A.A."/>
            <person name="Barrell B.G."/>
            <person name="Kuspa A."/>
        </authorList>
    </citation>
    <scope>NUCLEOTIDE SEQUENCE [LARGE SCALE GENOMIC DNA]</scope>
    <source>
        <strain>AX4</strain>
    </source>
</reference>
<reference key="2">
    <citation type="journal article" date="2006" name="PLoS Genet.">
        <title>The dictyostelium kinome -- analysis of the protein kinases from a simple model organism.</title>
        <authorList>
            <person name="Goldberg J.M."/>
            <person name="Manning G."/>
            <person name="Liu A."/>
            <person name="Fey P."/>
            <person name="Pilcher K.E."/>
            <person name="Xu Y."/>
            <person name="Smith J.L."/>
        </authorList>
    </citation>
    <scope>GENE FAMILY</scope>
    <scope>NOMENCLATURE</scope>
</reference>
<name>TAF1_DICDI</name>
<comment type="function">
    <text evidence="1">May be a component of the TFIID basal transcription factor complex.</text>
</comment>
<comment type="subcellular location">
    <subcellularLocation>
        <location evidence="1">Nucleus</location>
    </subcellularLocation>
</comment>
<comment type="similarity">
    <text evidence="5">Belongs to the TAF1 family.</text>
</comment>
<gene>
    <name type="primary">taf1</name>
    <name type="synonym">TFIID1</name>
    <name type="ORF">DDB_G0292242</name>
</gene>
<sequence>MAKDKEKKGNLTGFLFGNVKESGELDVEENDQVFKDLKKDLELFAKSSQHISFKKTIGIDEDDKNAVTDSVIVPDKNALDYEDIDEVAEEIQSTENEINKLNADKLANAAIARLQQQHKEREEQQRLKLLEQQQRQLSKKERRKQRKQVGSKQPLQIKKKPSVDDFDFDEEEEQQQQKSTRSEDEDDDDISSASSLSSSSASSSASSSRSPSMSRSASDIESDSMSDSSRSSGSSISSRSSISSSSSRSDSDSDGGGGGGGGGGGSHRRRHKEKKPKKKVTMKAGSYEVVKSILETPEMFTPEDQEFKVFVSGKSSEGFILKFSQLFAPKFPDKPTRKKSRKTRFSTPQTLNDDSIETDELLLWNQPSKKQPPPSIIKKPITEIDSITKQLLKSNAGITSSTGGGGEEDTLTSSNTTTPTLTSMQLYQAAAEEDEEYVPEPLRETEDEEIMTMFYMVPDSNYHSLQQVNWEDNIIWDEESLIKFKKSDHFNQFYLSSDNQQQNIIIKEAITMPVEINDLTPNLNKNSKQTSSSSTTTSTTTTTSTTTTTTTTTTATTLSSTSTSTTTQRNNKNKNKNNNNNINNSSKLFGLDHISEKEEIMDTDSQNLLQQPLSQEKDKEKEKDKDKAQNEQHIQTIVNNKKNSTTNNNNLTNNNGNNNNTNNNNNNSNNNSNNNNNNNNNNKQNNNKEIDEIMKSNIDKWSLFPISNQELENGDWIDNIIWDESMVPEKIQQVSMLILDLNDREMYFEEHIEKKEHNNGESGSNGDQQAPVKKKSKKKLALEAAQAAQAAALERAQAAARAANGQTMSFEEQLQKDKEEDERKEREEREQSQREIDKFNLSNDKFYRPVRKPPPRPPNGSTKVVIQHSLPGIKLSLVKTHLTKEDLIYAHRPRILFPSNVPFRIIIYNKEGSLSGDLSSSSNNLLLNSSTNSIMGGHNMRGSINGGMMSSSSSSSSSSSKKSLHKSDLSARDGRLVLIEYTEQHPPLVSNVGMGLRIRNYYKKKNTHDTGPKDLNFEDGELVMLDNNEESPFLGDINPGQTIQSVVNNLFKVPIHKHNSANTDFLLVKSRDGKRWYIRDVGPIYAAGQILPEVEVPAPNSRNANMFLKSRLQAYIYRQFLKKSNPQRRLKITDICSAFPSQSETSIRKRLKDCADFQRGGDDSGWWTVKDNFTLPTEEEFQKLVTPEAVVSFESMLIGLQRLQDNGIIHFTAPGTIPTILGNLDDEDPIKKSIKPVEDELSITPWNLTGSFLSAMQGKGRLQIISDDPTGREDEYSYLKMPQKVVNQKQKAIKLALQKNQVTGTDADLRKLSLSASKTVLLELGVDEETINKLARWQRIDLVRKKSSEAALASNSNAAMTKFARGSRYSLDHQNLQYKEQCQLVFDNQIKAIAGKGDDLYDEDLDADLLKDLEDSLFGDSNQSQNQNQNQNQNQNQSNNNNNKSSSKSTGKRSRSLFSRDESDEEEDNEEEEYNKLMGTKNKDEESKAKAKAKAEEEEIKAKAEEAKAKAKAKAEEDDLTQGDRVFVKRTTLFQKPDGSLFKRIEIIRDPKVVQDYQKKKHDQFLQDRKKFGKQNEEDEETKKQRRRIQERLRRLKKNDQREDSFNMNSSNSSIGATIGSSNMINISAGNIPVSNINNNNYNNNNNNNNFSLNTSSSNKPIPPHRSSSSGIGSSGSNNNSNTDRDQTRISIVMPNQQANSDSNSSSSTKIRIGQSSSSSSSSSSSSGHPRSSDREHRSSEHRSGEHRSSEHRSSEHRGSEHRSSEHRSGEHSSHHRSSEHRSGDREHRSSDRGDREHRSSEHRSSEHRSSEHRSSEHRSGDKEHRSDREHRSSEHRSGDREHRSDREHREHRSGDREHRSDREHREHRSERSRNSSSGSSSSSRDHRDSHHRNSTGSSSDSHSSSHHSSSNRDSNHNGGSSSNNNNNNSNNNHNNNNNSNNNNNNNNNNNNNNNINNNNNNNNNINNINNNNNNNINNINNNYNNNNNNNNNNNNNNNNNNNNNNINNNENNNTNNLSNSTNQSPTLSQSGIIIRYNGSNSGNSNNTNGGNNRTEDQSVLNTPLSASSSGSNRKKRTLDQSNSESPSLSSTTLDGSDKSSRRNRVRKDGSGADVELSNIFERILDKLRTNDEFIAFRHKVTPKLAPDYHKVIKNPIDLTTMRDRNRHWEYKSKNQFIDAIKLMVANCFEYNEKRFSHLLPIAEKLLTSTLQLLAPFDSQIGDLEKSIEQTNLKQSSSSLLLSVDHTNGSTPSTPITLNTPITPNLPSNSPFFPPVDPPSKAHHSAEDEEIDIVSLYESGVSPSVKNNFN</sequence>
<accession>Q54DH8</accession>
<keyword id="KW-0103">Bromodomain</keyword>
<keyword id="KW-0175">Coiled coil</keyword>
<keyword id="KW-0539">Nucleus</keyword>
<keyword id="KW-1185">Reference proteome</keyword>
<dbReference type="EMBL" id="AAFI02000188">
    <property type="protein sequence ID" value="EAL61331.1"/>
    <property type="molecule type" value="Genomic_DNA"/>
</dbReference>
<dbReference type="RefSeq" id="XP_629749.1">
    <property type="nucleotide sequence ID" value="XM_629747.1"/>
</dbReference>
<dbReference type="SMR" id="Q54DH8"/>
<dbReference type="FunCoup" id="Q54DH8">
    <property type="interactions" value="287"/>
</dbReference>
<dbReference type="STRING" id="44689.Q54DH8"/>
<dbReference type="GlyGen" id="Q54DH8">
    <property type="glycosylation" value="1 site"/>
</dbReference>
<dbReference type="PaxDb" id="44689-DDB0220687"/>
<dbReference type="EnsemblProtists" id="EAL61331">
    <property type="protein sequence ID" value="EAL61331"/>
    <property type="gene ID" value="DDB_G0292242"/>
</dbReference>
<dbReference type="GeneID" id="8628578"/>
<dbReference type="KEGG" id="ddi:DDB_G0292242"/>
<dbReference type="dictyBase" id="DDB_G0292242">
    <property type="gene designation" value="taf1"/>
</dbReference>
<dbReference type="VEuPathDB" id="AmoebaDB:DDB_G0292242"/>
<dbReference type="eggNOG" id="KOG0008">
    <property type="taxonomic scope" value="Eukaryota"/>
</dbReference>
<dbReference type="HOGENOM" id="CLU_230071_0_0_1"/>
<dbReference type="InParanoid" id="Q54DH8"/>
<dbReference type="OMA" id="RTEIHLW"/>
<dbReference type="Reactome" id="R-DDI-674695">
    <property type="pathway name" value="RNA Polymerase II Pre-transcription Events"/>
</dbReference>
<dbReference type="Reactome" id="R-DDI-73776">
    <property type="pathway name" value="RNA Polymerase II Promoter Escape"/>
</dbReference>
<dbReference type="Reactome" id="R-DDI-73779">
    <property type="pathway name" value="RNA Polymerase II Transcription Pre-Initiation And Promoter Opening"/>
</dbReference>
<dbReference type="Reactome" id="R-DDI-75953">
    <property type="pathway name" value="RNA Polymerase II Transcription Initiation"/>
</dbReference>
<dbReference type="Reactome" id="R-DDI-76042">
    <property type="pathway name" value="RNA Polymerase II Transcription Initiation And Promoter Clearance"/>
</dbReference>
<dbReference type="PRO" id="PR:Q54DH8"/>
<dbReference type="Proteomes" id="UP000002195">
    <property type="component" value="Chromosome 6"/>
</dbReference>
<dbReference type="GO" id="GO:0005669">
    <property type="term" value="C:transcription factor TFIID complex"/>
    <property type="evidence" value="ECO:0000250"/>
    <property type="project" value="dictyBase"/>
</dbReference>
<dbReference type="GO" id="GO:0004402">
    <property type="term" value="F:histone acetyltransferase activity"/>
    <property type="evidence" value="ECO:0000250"/>
    <property type="project" value="dictyBase"/>
</dbReference>
<dbReference type="GO" id="GO:0016251">
    <property type="term" value="F:RNA polymerase II general transcription initiation factor activity"/>
    <property type="evidence" value="ECO:0000318"/>
    <property type="project" value="GO_Central"/>
</dbReference>
<dbReference type="GO" id="GO:0017025">
    <property type="term" value="F:TBP-class protein binding"/>
    <property type="evidence" value="ECO:0000318"/>
    <property type="project" value="GO_Central"/>
</dbReference>
<dbReference type="GO" id="GO:0051123">
    <property type="term" value="P:RNA polymerase II preinitiation complex assembly"/>
    <property type="evidence" value="ECO:0000318"/>
    <property type="project" value="GO_Central"/>
</dbReference>
<dbReference type="CDD" id="cd04369">
    <property type="entry name" value="Bromodomain"/>
    <property type="match status" value="1"/>
</dbReference>
<dbReference type="FunFam" id="1.20.920.10:FF:000138">
    <property type="entry name" value="Transcription initiation factor TFIID subunit 1"/>
    <property type="match status" value="1"/>
</dbReference>
<dbReference type="Gene3D" id="1.20.920.10">
    <property type="entry name" value="Bromodomain-like"/>
    <property type="match status" value="1"/>
</dbReference>
<dbReference type="InterPro" id="IPR001487">
    <property type="entry name" value="Bromodomain"/>
</dbReference>
<dbReference type="InterPro" id="IPR036427">
    <property type="entry name" value="Bromodomain-like_sf"/>
</dbReference>
<dbReference type="InterPro" id="IPR018359">
    <property type="entry name" value="Bromodomain_CS"/>
</dbReference>
<dbReference type="InterPro" id="IPR040240">
    <property type="entry name" value="TAF1"/>
</dbReference>
<dbReference type="InterPro" id="IPR022591">
    <property type="entry name" value="TAF1_HAT_dom"/>
</dbReference>
<dbReference type="PANTHER" id="PTHR13900">
    <property type="entry name" value="TRANSCRIPTION INITIATION FACTOR TFIID"/>
    <property type="match status" value="1"/>
</dbReference>
<dbReference type="PANTHER" id="PTHR13900:SF0">
    <property type="entry name" value="TRANSCRIPTION INITIATION FACTOR TFIID SUBUNIT 1"/>
    <property type="match status" value="1"/>
</dbReference>
<dbReference type="Pfam" id="PF00439">
    <property type="entry name" value="Bromodomain"/>
    <property type="match status" value="1"/>
</dbReference>
<dbReference type="Pfam" id="PF12157">
    <property type="entry name" value="DUF3591"/>
    <property type="match status" value="1"/>
</dbReference>
<dbReference type="SMART" id="SM00297">
    <property type="entry name" value="BROMO"/>
    <property type="match status" value="1"/>
</dbReference>
<dbReference type="SUPFAM" id="SSF47370">
    <property type="entry name" value="Bromodomain"/>
    <property type="match status" value="1"/>
</dbReference>
<dbReference type="PROSITE" id="PS00633">
    <property type="entry name" value="BROMODOMAIN_1"/>
    <property type="match status" value="1"/>
</dbReference>
<dbReference type="PROSITE" id="PS50014">
    <property type="entry name" value="BROMODOMAIN_2"/>
    <property type="match status" value="1"/>
</dbReference>
<proteinExistence type="inferred from homology"/>
<protein>
    <recommendedName>
        <fullName>Transcription initiation factor TFIID subunit 1</fullName>
    </recommendedName>
</protein>
<organism>
    <name type="scientific">Dictyostelium discoideum</name>
    <name type="common">Social amoeba</name>
    <dbReference type="NCBI Taxonomy" id="44689"/>
    <lineage>
        <taxon>Eukaryota</taxon>
        <taxon>Amoebozoa</taxon>
        <taxon>Evosea</taxon>
        <taxon>Eumycetozoa</taxon>
        <taxon>Dictyostelia</taxon>
        <taxon>Dictyosteliales</taxon>
        <taxon>Dictyosteliaceae</taxon>
        <taxon>Dictyostelium</taxon>
    </lineage>
</organism>
<evidence type="ECO:0000250" key="1"/>
<evidence type="ECO:0000255" key="2"/>
<evidence type="ECO:0000255" key="3">
    <source>
        <dbReference type="PROSITE-ProRule" id="PRU00035"/>
    </source>
</evidence>
<evidence type="ECO:0000256" key="4">
    <source>
        <dbReference type="SAM" id="MobiDB-lite"/>
    </source>
</evidence>
<evidence type="ECO:0000305" key="5"/>
<feature type="chain" id="PRO_0000376869" description="Transcription initiation factor TFIID subunit 1">
    <location>
        <begin position="1"/>
        <end position="2310"/>
    </location>
</feature>
<feature type="domain" description="Bromo" evidence="3">
    <location>
        <begin position="2123"/>
        <end position="2217"/>
    </location>
</feature>
<feature type="region of interest" description="Disordered" evidence="4">
    <location>
        <begin position="115"/>
        <end position="284"/>
    </location>
</feature>
<feature type="region of interest" description="Disordered" evidence="4">
    <location>
        <begin position="330"/>
        <end position="352"/>
    </location>
</feature>
<feature type="region of interest" description="Disordered" evidence="4">
    <location>
        <begin position="395"/>
        <end position="421"/>
    </location>
</feature>
<feature type="region of interest" description="Disordered" evidence="4">
    <location>
        <begin position="521"/>
        <end position="587"/>
    </location>
</feature>
<feature type="region of interest" description="Disordered" evidence="4">
    <location>
        <begin position="602"/>
        <end position="686"/>
    </location>
</feature>
<feature type="region of interest" description="Disordered" evidence="4">
    <location>
        <begin position="755"/>
        <end position="778"/>
    </location>
</feature>
<feature type="region of interest" description="Disordered" evidence="4">
    <location>
        <begin position="802"/>
        <end position="862"/>
    </location>
</feature>
<feature type="region of interest" description="Disordered" evidence="4">
    <location>
        <begin position="937"/>
        <end position="968"/>
    </location>
</feature>
<feature type="region of interest" description="Disordered" evidence="4">
    <location>
        <begin position="1417"/>
        <end position="1494"/>
    </location>
</feature>
<feature type="region of interest" description="Disordered" evidence="4">
    <location>
        <begin position="1558"/>
        <end position="1616"/>
    </location>
</feature>
<feature type="region of interest" description="Disordered" evidence="4">
    <location>
        <begin position="1648"/>
        <end position="2111"/>
    </location>
</feature>
<feature type="region of interest" description="Disordered" evidence="4">
    <location>
        <begin position="2244"/>
        <end position="2289"/>
    </location>
</feature>
<feature type="coiled-coil region" evidence="2">
    <location>
        <begin position="80"/>
        <end position="150"/>
    </location>
</feature>
<feature type="coiled-coil region" evidence="2">
    <location>
        <begin position="809"/>
        <end position="846"/>
    </location>
</feature>
<feature type="coiled-coil region" evidence="2">
    <location>
        <begin position="1422"/>
        <end position="1522"/>
    </location>
</feature>
<feature type="coiled-coil region" evidence="2">
    <location>
        <begin position="1574"/>
        <end position="1604"/>
    </location>
</feature>
<feature type="coiled-coil region" evidence="2">
    <location>
        <begin position="1946"/>
        <end position="2004"/>
    </location>
</feature>
<feature type="compositionally biased region" description="Basic and acidic residues" evidence="4">
    <location>
        <begin position="117"/>
        <end position="129"/>
    </location>
</feature>
<feature type="compositionally biased region" description="Basic residues" evidence="4">
    <location>
        <begin position="140"/>
        <end position="149"/>
    </location>
</feature>
<feature type="compositionally biased region" description="Acidic residues" evidence="4">
    <location>
        <begin position="164"/>
        <end position="174"/>
    </location>
</feature>
<feature type="compositionally biased region" description="Low complexity" evidence="4">
    <location>
        <begin position="191"/>
        <end position="248"/>
    </location>
</feature>
<feature type="compositionally biased region" description="Gly residues" evidence="4">
    <location>
        <begin position="254"/>
        <end position="265"/>
    </location>
</feature>
<feature type="compositionally biased region" description="Basic residues" evidence="4">
    <location>
        <begin position="266"/>
        <end position="281"/>
    </location>
</feature>
<feature type="compositionally biased region" description="Low complexity" evidence="4">
    <location>
        <begin position="411"/>
        <end position="421"/>
    </location>
</feature>
<feature type="compositionally biased region" description="Low complexity" evidence="4">
    <location>
        <begin position="524"/>
        <end position="587"/>
    </location>
</feature>
<feature type="compositionally biased region" description="Polar residues" evidence="4">
    <location>
        <begin position="603"/>
        <end position="614"/>
    </location>
</feature>
<feature type="compositionally biased region" description="Basic and acidic residues" evidence="4">
    <location>
        <begin position="615"/>
        <end position="630"/>
    </location>
</feature>
<feature type="compositionally biased region" description="Low complexity" evidence="4">
    <location>
        <begin position="639"/>
        <end position="685"/>
    </location>
</feature>
<feature type="compositionally biased region" description="Basic and acidic residues" evidence="4">
    <location>
        <begin position="813"/>
        <end position="838"/>
    </location>
</feature>
<feature type="compositionally biased region" description="Low complexity" evidence="4">
    <location>
        <begin position="950"/>
        <end position="961"/>
    </location>
</feature>
<feature type="compositionally biased region" description="Low complexity" evidence="4">
    <location>
        <begin position="1421"/>
        <end position="1449"/>
    </location>
</feature>
<feature type="compositionally biased region" description="Acidic residues" evidence="4">
    <location>
        <begin position="1462"/>
        <end position="1473"/>
    </location>
</feature>
<feature type="compositionally biased region" description="Basic and acidic residues" evidence="4">
    <location>
        <begin position="1481"/>
        <end position="1494"/>
    </location>
</feature>
<feature type="compositionally biased region" description="Basic and acidic residues" evidence="4">
    <location>
        <begin position="1563"/>
        <end position="1576"/>
    </location>
</feature>
<feature type="compositionally biased region" description="Basic and acidic residues" evidence="4">
    <location>
        <begin position="1588"/>
        <end position="1605"/>
    </location>
</feature>
<feature type="compositionally biased region" description="Polar residues" evidence="4">
    <location>
        <begin position="1606"/>
        <end position="1616"/>
    </location>
</feature>
<feature type="compositionally biased region" description="Low complexity" evidence="4">
    <location>
        <begin position="1648"/>
        <end position="1659"/>
    </location>
</feature>
<feature type="compositionally biased region" description="Low complexity" evidence="4">
    <location>
        <begin position="1667"/>
        <end position="1682"/>
    </location>
</feature>
<feature type="compositionally biased region" description="Low complexity" evidence="4">
    <location>
        <begin position="1700"/>
        <end position="1730"/>
    </location>
</feature>
<feature type="compositionally biased region" description="Basic and acidic residues" evidence="4">
    <location>
        <begin position="1731"/>
        <end position="1773"/>
    </location>
</feature>
<feature type="compositionally biased region" description="Basic and acidic residues" evidence="4">
    <location>
        <begin position="1780"/>
        <end position="1874"/>
    </location>
</feature>
<feature type="compositionally biased region" description="Low complexity" evidence="4">
    <location>
        <begin position="1895"/>
        <end position="2023"/>
    </location>
</feature>
<feature type="compositionally biased region" description="Low complexity" evidence="4">
    <location>
        <begin position="2038"/>
        <end position="2053"/>
    </location>
</feature>
<feature type="compositionally biased region" description="Polar residues" evidence="4">
    <location>
        <begin position="2058"/>
        <end position="2072"/>
    </location>
</feature>
<feature type="compositionally biased region" description="Low complexity" evidence="4">
    <location>
        <begin position="2082"/>
        <end position="2091"/>
    </location>
</feature>
<feature type="compositionally biased region" description="Basic and acidic residues" evidence="4">
    <location>
        <begin position="2096"/>
        <end position="2111"/>
    </location>
</feature>
<feature type="compositionally biased region" description="Low complexity" evidence="4">
    <location>
        <begin position="2250"/>
        <end position="2271"/>
    </location>
</feature>